<name>NAGB_ECOBW</name>
<proteinExistence type="inferred from homology"/>
<reference key="1">
    <citation type="journal article" date="2009" name="J. Bacteriol.">
        <title>Genomic sequencing reveals regulatory mutations and recombinational events in the widely used MC4100 lineage of Escherichia coli K-12.</title>
        <authorList>
            <person name="Ferenci T."/>
            <person name="Zhou Z."/>
            <person name="Betteridge T."/>
            <person name="Ren Y."/>
            <person name="Liu Y."/>
            <person name="Feng L."/>
            <person name="Reeves P.R."/>
            <person name="Wang L."/>
        </authorList>
    </citation>
    <scope>NUCLEOTIDE SEQUENCE [LARGE SCALE GENOMIC DNA]</scope>
    <source>
        <strain>K12 / MC4100 / BW2952</strain>
    </source>
</reference>
<feature type="chain" id="PRO_1000214082" description="Glucosamine-6-phosphate deaminase">
    <location>
        <begin position="1"/>
        <end position="266"/>
    </location>
</feature>
<feature type="active site" description="Proton acceptor; for enolization step" evidence="1">
    <location>
        <position position="72"/>
    </location>
</feature>
<feature type="active site" description="For ring-opening step" evidence="1">
    <location>
        <position position="141"/>
    </location>
</feature>
<feature type="active site" description="Proton acceptor; for ring-opening step" evidence="1">
    <location>
        <position position="143"/>
    </location>
</feature>
<feature type="active site" description="For ring-opening step" evidence="1">
    <location>
        <position position="148"/>
    </location>
</feature>
<feature type="site" description="Part of the allosteric site" evidence="1">
    <location>
        <position position="151"/>
    </location>
</feature>
<feature type="site" description="Part of the allosteric site" evidence="1">
    <location>
        <position position="158"/>
    </location>
</feature>
<feature type="site" description="Part of the allosteric site" evidence="1">
    <location>
        <position position="160"/>
    </location>
</feature>
<feature type="site" description="Part of the allosteric site" evidence="1">
    <location>
        <position position="161"/>
    </location>
</feature>
<feature type="site" description="Part of the allosteric site" evidence="1">
    <location>
        <position position="254"/>
    </location>
</feature>
<feature type="disulfide bond" description="Interchain" evidence="1">
    <location>
        <position position="219"/>
    </location>
</feature>
<gene>
    <name evidence="1" type="primary">nagB</name>
    <name type="ordered locus">BWG_0538</name>
</gene>
<comment type="function">
    <text evidence="1">Catalyzes the reversible isomerization-deamination of glucosamine 6-phosphate (GlcN6P) to form fructose 6-phosphate (Fru6P) and ammonium ion.</text>
</comment>
<comment type="catalytic activity">
    <reaction evidence="1">
        <text>alpha-D-glucosamine 6-phosphate + H2O = beta-D-fructose 6-phosphate + NH4(+)</text>
        <dbReference type="Rhea" id="RHEA:12172"/>
        <dbReference type="ChEBI" id="CHEBI:15377"/>
        <dbReference type="ChEBI" id="CHEBI:28938"/>
        <dbReference type="ChEBI" id="CHEBI:57634"/>
        <dbReference type="ChEBI" id="CHEBI:75989"/>
        <dbReference type="EC" id="3.5.99.6"/>
    </reaction>
</comment>
<comment type="activity regulation">
    <text evidence="1">Allosterically activated by N-acetylglucosamine 6-phosphate (GlcNAc6P).</text>
</comment>
<comment type="pathway">
    <text evidence="1">Amino-sugar metabolism; N-acetylneuraminate degradation; D-fructose 6-phosphate from N-acetylneuraminate: step 5/5.</text>
</comment>
<comment type="subunit">
    <text evidence="1">Homohexamer; trimer of disulfide-linked dimers.</text>
</comment>
<comment type="similarity">
    <text evidence="1">Belongs to the glucosamine/galactosamine-6-phosphate isomerase family. NagB subfamily.</text>
</comment>
<keyword id="KW-0021">Allosteric enzyme</keyword>
<keyword id="KW-0119">Carbohydrate metabolism</keyword>
<keyword id="KW-1015">Disulfide bond</keyword>
<keyword id="KW-0378">Hydrolase</keyword>
<organism>
    <name type="scientific">Escherichia coli (strain K12 / MC4100 / BW2952)</name>
    <dbReference type="NCBI Taxonomy" id="595496"/>
    <lineage>
        <taxon>Bacteria</taxon>
        <taxon>Pseudomonadati</taxon>
        <taxon>Pseudomonadota</taxon>
        <taxon>Gammaproteobacteria</taxon>
        <taxon>Enterobacterales</taxon>
        <taxon>Enterobacteriaceae</taxon>
        <taxon>Escherichia</taxon>
    </lineage>
</organism>
<dbReference type="EC" id="3.5.99.6" evidence="1"/>
<dbReference type="EMBL" id="CP001396">
    <property type="protein sequence ID" value="ACR63311.1"/>
    <property type="molecule type" value="Genomic_DNA"/>
</dbReference>
<dbReference type="RefSeq" id="WP_001237072.1">
    <property type="nucleotide sequence ID" value="NC_012759.1"/>
</dbReference>
<dbReference type="SMR" id="C4ZWF4"/>
<dbReference type="GeneID" id="93776807"/>
<dbReference type="KEGG" id="ebw:BWG_0538"/>
<dbReference type="HOGENOM" id="CLU_049611_0_1_6"/>
<dbReference type="UniPathway" id="UPA00629">
    <property type="reaction ID" value="UER00684"/>
</dbReference>
<dbReference type="GO" id="GO:0005829">
    <property type="term" value="C:cytosol"/>
    <property type="evidence" value="ECO:0007669"/>
    <property type="project" value="TreeGrafter"/>
</dbReference>
<dbReference type="GO" id="GO:0004342">
    <property type="term" value="F:glucosamine-6-phosphate deaminase activity"/>
    <property type="evidence" value="ECO:0007669"/>
    <property type="project" value="UniProtKB-UniRule"/>
</dbReference>
<dbReference type="GO" id="GO:0042802">
    <property type="term" value="F:identical protein binding"/>
    <property type="evidence" value="ECO:0007669"/>
    <property type="project" value="TreeGrafter"/>
</dbReference>
<dbReference type="GO" id="GO:0005975">
    <property type="term" value="P:carbohydrate metabolic process"/>
    <property type="evidence" value="ECO:0007669"/>
    <property type="project" value="InterPro"/>
</dbReference>
<dbReference type="GO" id="GO:0006043">
    <property type="term" value="P:glucosamine catabolic process"/>
    <property type="evidence" value="ECO:0007669"/>
    <property type="project" value="TreeGrafter"/>
</dbReference>
<dbReference type="GO" id="GO:0006046">
    <property type="term" value="P:N-acetylglucosamine catabolic process"/>
    <property type="evidence" value="ECO:0007669"/>
    <property type="project" value="TreeGrafter"/>
</dbReference>
<dbReference type="GO" id="GO:0019262">
    <property type="term" value="P:N-acetylneuraminate catabolic process"/>
    <property type="evidence" value="ECO:0007669"/>
    <property type="project" value="UniProtKB-UniRule"/>
</dbReference>
<dbReference type="CDD" id="cd01399">
    <property type="entry name" value="GlcN6P_deaminase"/>
    <property type="match status" value="1"/>
</dbReference>
<dbReference type="FunFam" id="3.40.50.1360:FF:000002">
    <property type="entry name" value="Glucosamine-6-phosphate deaminase"/>
    <property type="match status" value="1"/>
</dbReference>
<dbReference type="Gene3D" id="3.40.50.1360">
    <property type="match status" value="1"/>
</dbReference>
<dbReference type="HAMAP" id="MF_01241">
    <property type="entry name" value="GlcN6P_deamin"/>
    <property type="match status" value="1"/>
</dbReference>
<dbReference type="InterPro" id="IPR006148">
    <property type="entry name" value="Glc/Gal-6P_isomerase"/>
</dbReference>
<dbReference type="InterPro" id="IPR004547">
    <property type="entry name" value="Glucosamine6P_isomerase"/>
</dbReference>
<dbReference type="InterPro" id="IPR018321">
    <property type="entry name" value="Glucosamine6P_isomerase_CS"/>
</dbReference>
<dbReference type="InterPro" id="IPR037171">
    <property type="entry name" value="NagB/RpiA_transferase-like"/>
</dbReference>
<dbReference type="NCBIfam" id="TIGR00502">
    <property type="entry name" value="nagB"/>
    <property type="match status" value="1"/>
</dbReference>
<dbReference type="NCBIfam" id="NF001685">
    <property type="entry name" value="PRK00443.1-5"/>
    <property type="match status" value="1"/>
</dbReference>
<dbReference type="PANTHER" id="PTHR11280">
    <property type="entry name" value="GLUCOSAMINE-6-PHOSPHATE ISOMERASE"/>
    <property type="match status" value="1"/>
</dbReference>
<dbReference type="PANTHER" id="PTHR11280:SF5">
    <property type="entry name" value="GLUCOSAMINE-6-PHOSPHATE ISOMERASE"/>
    <property type="match status" value="1"/>
</dbReference>
<dbReference type="Pfam" id="PF01182">
    <property type="entry name" value="Glucosamine_iso"/>
    <property type="match status" value="1"/>
</dbReference>
<dbReference type="SUPFAM" id="SSF100950">
    <property type="entry name" value="NagB/RpiA/CoA transferase-like"/>
    <property type="match status" value="1"/>
</dbReference>
<dbReference type="PROSITE" id="PS01161">
    <property type="entry name" value="GLC_GALNAC_ISOMERASE"/>
    <property type="match status" value="1"/>
</dbReference>
<protein>
    <recommendedName>
        <fullName evidence="1">Glucosamine-6-phosphate deaminase</fullName>
        <ecNumber evidence="1">3.5.99.6</ecNumber>
    </recommendedName>
    <alternativeName>
        <fullName evidence="1">GlcN6P deaminase</fullName>
        <shortName evidence="1">GNPDA</shortName>
    </alternativeName>
    <alternativeName>
        <fullName evidence="1">Glucosamine-6-phosphate isomerase</fullName>
    </alternativeName>
</protein>
<sequence length="266" mass="29774">MRLIPLTTAEQVGKWAARHIVNRINAFKPTADRPFVLGLPTGGTPMTTYKALVEMHKAGQVSFKHVVTFNMDEYVGLPKEHPESYYSFMHRNFFDHVDIPAENINLLNGNAPDIDAECRQYEEKIRSYGKIHLFMGGVGNDGHIAFNEPASSLASRTRIKTLTHDTRVANSRFFDNDVNQVPKYALTVGVGTLLDAEEVMILVLGSQKALALQAAVEGCVNHMWTISCLQLHPKAIMVCDEPSTMELKVKTLRYFNELEAENIKGL</sequence>
<evidence type="ECO:0000255" key="1">
    <source>
        <dbReference type="HAMAP-Rule" id="MF_01241"/>
    </source>
</evidence>
<accession>C4ZWF4</accession>